<sequence>MVSVTHCDSLWFGADIITMRGGNYQLIPQGAIAVTGDKIVWIGPHAELPPIHAARQVVYEGGLITPGLIDCHTHLVFGDDRSNEFEQRLNGVSYAEIAANGGGIISTVRATRQASEQQLLEQALFRLKPLLAEGVTTIEIKSGYGLNLESEIKMLRVARRLGELLPIDVKTTCLAAHALPPEFIGQPDDYIDVVCNSIIPQVAVENLADAVDAFCEHLAFSPAQVERVFLAAQKAGLPVKLHAEQLSALRGATLAAKFHAISADHLEYATESDVQAMANAGTVAVLLPGAYYLLRETQCPPIDLFRQYKVPMALASDANPGTSPVLSLRLMLNMACTLFRMTPEEALAGVTCHAAQALGVQQTQGTLETGKLANWVHWPLSHPAELAYWLGGQLPATVVFRGEVRP</sequence>
<accession>Q9ZC74</accession>
<accession>Q0WFH9</accession>
<keyword id="KW-0963">Cytoplasm</keyword>
<keyword id="KW-0369">Histidine metabolism</keyword>
<keyword id="KW-0378">Hydrolase</keyword>
<keyword id="KW-0408">Iron</keyword>
<keyword id="KW-0479">Metal-binding</keyword>
<keyword id="KW-1185">Reference proteome</keyword>
<keyword id="KW-0862">Zinc</keyword>
<feature type="chain" id="PRO_0000160977" description="Imidazolonepropionase">
    <location>
        <begin position="1"/>
        <end position="406"/>
    </location>
</feature>
<feature type="binding site" evidence="1">
    <location>
        <position position="72"/>
    </location>
    <ligand>
        <name>Fe(3+)</name>
        <dbReference type="ChEBI" id="CHEBI:29034"/>
    </ligand>
</feature>
<feature type="binding site" evidence="1">
    <location>
        <position position="72"/>
    </location>
    <ligand>
        <name>Zn(2+)</name>
        <dbReference type="ChEBI" id="CHEBI:29105"/>
    </ligand>
</feature>
<feature type="binding site" evidence="1">
    <location>
        <position position="74"/>
    </location>
    <ligand>
        <name>Fe(3+)</name>
        <dbReference type="ChEBI" id="CHEBI:29034"/>
    </ligand>
</feature>
<feature type="binding site" evidence="1">
    <location>
        <position position="74"/>
    </location>
    <ligand>
        <name>Zn(2+)</name>
        <dbReference type="ChEBI" id="CHEBI:29105"/>
    </ligand>
</feature>
<feature type="binding site" evidence="1">
    <location>
        <position position="81"/>
    </location>
    <ligand>
        <name>4-imidazolone-5-propanoate</name>
        <dbReference type="ChEBI" id="CHEBI:77893"/>
    </ligand>
</feature>
<feature type="binding site" evidence="1">
    <location>
        <position position="144"/>
    </location>
    <ligand>
        <name>4-imidazolone-5-propanoate</name>
        <dbReference type="ChEBI" id="CHEBI:77893"/>
    </ligand>
</feature>
<feature type="binding site" evidence="1">
    <location>
        <position position="144"/>
    </location>
    <ligand>
        <name>N-formimidoyl-L-glutamate</name>
        <dbReference type="ChEBI" id="CHEBI:58928"/>
    </ligand>
</feature>
<feature type="binding site" evidence="1">
    <location>
        <position position="177"/>
    </location>
    <ligand>
        <name>4-imidazolone-5-propanoate</name>
        <dbReference type="ChEBI" id="CHEBI:77893"/>
    </ligand>
</feature>
<feature type="binding site" evidence="1">
    <location>
        <position position="242"/>
    </location>
    <ligand>
        <name>Fe(3+)</name>
        <dbReference type="ChEBI" id="CHEBI:29034"/>
    </ligand>
</feature>
<feature type="binding site" evidence="1">
    <location>
        <position position="242"/>
    </location>
    <ligand>
        <name>Zn(2+)</name>
        <dbReference type="ChEBI" id="CHEBI:29105"/>
    </ligand>
</feature>
<feature type="binding site" evidence="1">
    <location>
        <position position="245"/>
    </location>
    <ligand>
        <name>4-imidazolone-5-propanoate</name>
        <dbReference type="ChEBI" id="CHEBI:77893"/>
    </ligand>
</feature>
<feature type="binding site" evidence="1">
    <location>
        <position position="317"/>
    </location>
    <ligand>
        <name>Fe(3+)</name>
        <dbReference type="ChEBI" id="CHEBI:29034"/>
    </ligand>
</feature>
<feature type="binding site" evidence="1">
    <location>
        <position position="317"/>
    </location>
    <ligand>
        <name>Zn(2+)</name>
        <dbReference type="ChEBI" id="CHEBI:29105"/>
    </ligand>
</feature>
<feature type="binding site" evidence="1">
    <location>
        <position position="319"/>
    </location>
    <ligand>
        <name>N-formimidoyl-L-glutamate</name>
        <dbReference type="ChEBI" id="CHEBI:58928"/>
    </ligand>
</feature>
<feature type="binding site" evidence="1">
    <location>
        <position position="321"/>
    </location>
    <ligand>
        <name>N-formimidoyl-L-glutamate</name>
        <dbReference type="ChEBI" id="CHEBI:58928"/>
    </ligand>
</feature>
<feature type="binding site" evidence="1">
    <location>
        <position position="322"/>
    </location>
    <ligand>
        <name>4-imidazolone-5-propanoate</name>
        <dbReference type="ChEBI" id="CHEBI:77893"/>
    </ligand>
</feature>
<organism>
    <name type="scientific">Yersinia pestis</name>
    <dbReference type="NCBI Taxonomy" id="632"/>
    <lineage>
        <taxon>Bacteria</taxon>
        <taxon>Pseudomonadati</taxon>
        <taxon>Pseudomonadota</taxon>
        <taxon>Gammaproteobacteria</taxon>
        <taxon>Enterobacterales</taxon>
        <taxon>Yersiniaceae</taxon>
        <taxon>Yersinia</taxon>
    </lineage>
</organism>
<reference key="1">
    <citation type="submission" date="1998-10" db="EMBL/GenBank/DDBJ databases">
        <title>DNA sequence of the 102 kbases unstable region of Yersinia pestis.</title>
        <authorList>
            <person name="Buchrieser C."/>
            <person name="Rusniok C."/>
            <person name="Couve E."/>
            <person name="Frangeul L."/>
            <person name="Billault A."/>
            <person name="Kunst F."/>
            <person name="Carniel E."/>
            <person name="Glaser P."/>
        </authorList>
    </citation>
    <scope>NUCLEOTIDE SEQUENCE [GENOMIC DNA]</scope>
    <source>
        <strain>6/69</strain>
    </source>
</reference>
<reference key="2">
    <citation type="journal article" date="2001" name="Nature">
        <title>Genome sequence of Yersinia pestis, the causative agent of plague.</title>
        <authorList>
            <person name="Parkhill J."/>
            <person name="Wren B.W."/>
            <person name="Thomson N.R."/>
            <person name="Titball R.W."/>
            <person name="Holden M.T.G."/>
            <person name="Prentice M.B."/>
            <person name="Sebaihia M."/>
            <person name="James K.D."/>
            <person name="Churcher C.M."/>
            <person name="Mungall K.L."/>
            <person name="Baker S."/>
            <person name="Basham D."/>
            <person name="Bentley S.D."/>
            <person name="Brooks K."/>
            <person name="Cerdeno-Tarraga A.-M."/>
            <person name="Chillingworth T."/>
            <person name="Cronin A."/>
            <person name="Davies R.M."/>
            <person name="Davis P."/>
            <person name="Dougan G."/>
            <person name="Feltwell T."/>
            <person name="Hamlin N."/>
            <person name="Holroyd S."/>
            <person name="Jagels K."/>
            <person name="Karlyshev A.V."/>
            <person name="Leather S."/>
            <person name="Moule S."/>
            <person name="Oyston P.C.F."/>
            <person name="Quail M.A."/>
            <person name="Rutherford K.M."/>
            <person name="Simmonds M."/>
            <person name="Skelton J."/>
            <person name="Stevens K."/>
            <person name="Whitehead S."/>
            <person name="Barrell B.G."/>
        </authorList>
    </citation>
    <scope>NUCLEOTIDE SEQUENCE [LARGE SCALE GENOMIC DNA]</scope>
    <source>
        <strain>CO-92 / Biovar Orientalis</strain>
    </source>
</reference>
<reference key="3">
    <citation type="journal article" date="2002" name="J. Bacteriol.">
        <title>Genome sequence of Yersinia pestis KIM.</title>
        <authorList>
            <person name="Deng W."/>
            <person name="Burland V."/>
            <person name="Plunkett G. III"/>
            <person name="Boutin A."/>
            <person name="Mayhew G.F."/>
            <person name="Liss P."/>
            <person name="Perna N.T."/>
            <person name="Rose D.J."/>
            <person name="Mau B."/>
            <person name="Zhou S."/>
            <person name="Schwartz D.C."/>
            <person name="Fetherston J.D."/>
            <person name="Lindler L.E."/>
            <person name="Brubaker R.R."/>
            <person name="Plano G.V."/>
            <person name="Straley S.C."/>
            <person name="McDonough K.A."/>
            <person name="Nilles M.L."/>
            <person name="Matson J.S."/>
            <person name="Blattner F.R."/>
            <person name="Perry R.D."/>
        </authorList>
    </citation>
    <scope>NUCLEOTIDE SEQUENCE [LARGE SCALE GENOMIC DNA]</scope>
    <source>
        <strain>KIM10+ / Biovar Mediaevalis</strain>
    </source>
</reference>
<reference key="4">
    <citation type="journal article" date="2004" name="DNA Res.">
        <title>Complete genome sequence of Yersinia pestis strain 91001, an isolate avirulent to humans.</title>
        <authorList>
            <person name="Song Y."/>
            <person name="Tong Z."/>
            <person name="Wang J."/>
            <person name="Wang L."/>
            <person name="Guo Z."/>
            <person name="Han Y."/>
            <person name="Zhang J."/>
            <person name="Pei D."/>
            <person name="Zhou D."/>
            <person name="Qin H."/>
            <person name="Pang X."/>
            <person name="Han Y."/>
            <person name="Zhai J."/>
            <person name="Li M."/>
            <person name="Cui B."/>
            <person name="Qi Z."/>
            <person name="Jin L."/>
            <person name="Dai R."/>
            <person name="Chen F."/>
            <person name="Li S."/>
            <person name="Ye C."/>
            <person name="Du Z."/>
            <person name="Lin W."/>
            <person name="Wang J."/>
            <person name="Yu J."/>
            <person name="Yang H."/>
            <person name="Wang J."/>
            <person name="Huang P."/>
            <person name="Yang R."/>
        </authorList>
    </citation>
    <scope>NUCLEOTIDE SEQUENCE [LARGE SCALE GENOMIC DNA]</scope>
    <source>
        <strain>91001 / Biovar Mediaevalis</strain>
    </source>
</reference>
<comment type="function">
    <text evidence="1">Catalyzes the hydrolytic cleavage of the carbon-nitrogen bond in imidazolone-5-propanoate to yield N-formimidoyl-L-glutamate. It is the third step in the universal histidine degradation pathway.</text>
</comment>
<comment type="catalytic activity">
    <reaction evidence="1">
        <text>4-imidazolone-5-propanoate + H2O = N-formimidoyl-L-glutamate</text>
        <dbReference type="Rhea" id="RHEA:23660"/>
        <dbReference type="ChEBI" id="CHEBI:15377"/>
        <dbReference type="ChEBI" id="CHEBI:58928"/>
        <dbReference type="ChEBI" id="CHEBI:77893"/>
        <dbReference type="EC" id="3.5.2.7"/>
    </reaction>
</comment>
<comment type="cofactor">
    <cofactor evidence="1">
        <name>Zn(2+)</name>
        <dbReference type="ChEBI" id="CHEBI:29105"/>
    </cofactor>
    <cofactor evidence="1">
        <name>Fe(3+)</name>
        <dbReference type="ChEBI" id="CHEBI:29034"/>
    </cofactor>
    <text evidence="1">Binds 1 zinc or iron ion per subunit.</text>
</comment>
<comment type="pathway">
    <text evidence="1">Amino-acid degradation; L-histidine degradation into L-glutamate; N-formimidoyl-L-glutamate from L-histidine: step 3/3.</text>
</comment>
<comment type="subcellular location">
    <subcellularLocation>
        <location evidence="1">Cytoplasm</location>
    </subcellularLocation>
</comment>
<comment type="similarity">
    <text evidence="1">Belongs to the metallo-dependent hydrolases superfamily. HutI family.</text>
</comment>
<comment type="sequence caution" evidence="2">
    <conflict type="erroneous initiation">
        <sequence resource="EMBL-CDS" id="AAM85899"/>
    </conflict>
</comment>
<evidence type="ECO:0000255" key="1">
    <source>
        <dbReference type="HAMAP-Rule" id="MF_00372"/>
    </source>
</evidence>
<evidence type="ECO:0000305" key="2"/>
<name>HUTI_YERPE</name>
<proteinExistence type="inferred from homology"/>
<gene>
    <name evidence="1" type="primary">hutI</name>
    <name type="ordered locus">YPO1972</name>
    <name type="ordered locus">y2340</name>
    <name type="ordered locus">YP_1714</name>
</gene>
<protein>
    <recommendedName>
        <fullName evidence="1">Imidazolonepropionase</fullName>
        <ecNumber evidence="1">3.5.2.7</ecNumber>
    </recommendedName>
    <alternativeName>
        <fullName evidence="1">Imidazolone-5-propionate hydrolase</fullName>
    </alternativeName>
</protein>
<dbReference type="EC" id="3.5.2.7" evidence="1"/>
<dbReference type="EMBL" id="AL031866">
    <property type="protein sequence ID" value="CAA21331.1"/>
    <property type="molecule type" value="Genomic_DNA"/>
</dbReference>
<dbReference type="EMBL" id="AL590842">
    <property type="protein sequence ID" value="CAL20609.1"/>
    <property type="molecule type" value="Genomic_DNA"/>
</dbReference>
<dbReference type="EMBL" id="AE009952">
    <property type="protein sequence ID" value="AAM85899.1"/>
    <property type="status" value="ALT_INIT"/>
    <property type="molecule type" value="Genomic_DNA"/>
</dbReference>
<dbReference type="EMBL" id="AE017042">
    <property type="protein sequence ID" value="AAS61943.1"/>
    <property type="molecule type" value="Genomic_DNA"/>
</dbReference>
<dbReference type="PIR" id="AF0240">
    <property type="entry name" value="AF0240"/>
</dbReference>
<dbReference type="PIR" id="T46988">
    <property type="entry name" value="T46988"/>
</dbReference>
<dbReference type="RefSeq" id="WP_002211281.1">
    <property type="nucleotide sequence ID" value="NZ_WUCM01000092.1"/>
</dbReference>
<dbReference type="RefSeq" id="YP_002346959.1">
    <property type="nucleotide sequence ID" value="NC_003143.1"/>
</dbReference>
<dbReference type="SMR" id="Q9ZC74"/>
<dbReference type="STRING" id="214092.YPO1972"/>
<dbReference type="PaxDb" id="214092-YPO1972"/>
<dbReference type="EnsemblBacteria" id="AAS61943">
    <property type="protein sequence ID" value="AAS61943"/>
    <property type="gene ID" value="YP_1714"/>
</dbReference>
<dbReference type="GeneID" id="57976686"/>
<dbReference type="KEGG" id="ype:YPO1972"/>
<dbReference type="KEGG" id="ypj:CH55_767"/>
<dbReference type="KEGG" id="ypk:y2340"/>
<dbReference type="KEGG" id="ypl:CH46_3143"/>
<dbReference type="KEGG" id="ypm:YP_1714"/>
<dbReference type="KEGG" id="ypv:BZ15_1569"/>
<dbReference type="KEGG" id="ypw:CH59_4158"/>
<dbReference type="PATRIC" id="fig|214092.21.peg.2351"/>
<dbReference type="eggNOG" id="COG1228">
    <property type="taxonomic scope" value="Bacteria"/>
</dbReference>
<dbReference type="HOGENOM" id="CLU_041647_0_0_6"/>
<dbReference type="OMA" id="CAPHARW"/>
<dbReference type="OrthoDB" id="9776455at2"/>
<dbReference type="UniPathway" id="UPA00379">
    <property type="reaction ID" value="UER00551"/>
</dbReference>
<dbReference type="Proteomes" id="UP000000815">
    <property type="component" value="Chromosome"/>
</dbReference>
<dbReference type="Proteomes" id="UP000001019">
    <property type="component" value="Chromosome"/>
</dbReference>
<dbReference type="Proteomes" id="UP000002490">
    <property type="component" value="Chromosome"/>
</dbReference>
<dbReference type="GO" id="GO:0005737">
    <property type="term" value="C:cytoplasm"/>
    <property type="evidence" value="ECO:0007669"/>
    <property type="project" value="UniProtKB-SubCell"/>
</dbReference>
<dbReference type="GO" id="GO:0050480">
    <property type="term" value="F:imidazolonepropionase activity"/>
    <property type="evidence" value="ECO:0000318"/>
    <property type="project" value="GO_Central"/>
</dbReference>
<dbReference type="GO" id="GO:0005506">
    <property type="term" value="F:iron ion binding"/>
    <property type="evidence" value="ECO:0007669"/>
    <property type="project" value="UniProtKB-UniRule"/>
</dbReference>
<dbReference type="GO" id="GO:0008270">
    <property type="term" value="F:zinc ion binding"/>
    <property type="evidence" value="ECO:0007669"/>
    <property type="project" value="UniProtKB-UniRule"/>
</dbReference>
<dbReference type="GO" id="GO:0006548">
    <property type="term" value="P:L-histidine catabolic process"/>
    <property type="evidence" value="ECO:0000318"/>
    <property type="project" value="GO_Central"/>
</dbReference>
<dbReference type="GO" id="GO:0019556">
    <property type="term" value="P:L-histidine catabolic process to glutamate and formamide"/>
    <property type="evidence" value="ECO:0007669"/>
    <property type="project" value="UniProtKB-UniPathway"/>
</dbReference>
<dbReference type="GO" id="GO:0019557">
    <property type="term" value="P:L-histidine catabolic process to glutamate and formate"/>
    <property type="evidence" value="ECO:0007669"/>
    <property type="project" value="UniProtKB-UniPathway"/>
</dbReference>
<dbReference type="CDD" id="cd01296">
    <property type="entry name" value="Imidazolone-5PH"/>
    <property type="match status" value="1"/>
</dbReference>
<dbReference type="FunFam" id="3.20.20.140:FF:000007">
    <property type="entry name" value="Imidazolonepropionase"/>
    <property type="match status" value="1"/>
</dbReference>
<dbReference type="Gene3D" id="3.20.20.140">
    <property type="entry name" value="Metal-dependent hydrolases"/>
    <property type="match status" value="1"/>
</dbReference>
<dbReference type="Gene3D" id="2.30.40.10">
    <property type="entry name" value="Urease, subunit C, domain 1"/>
    <property type="match status" value="1"/>
</dbReference>
<dbReference type="HAMAP" id="MF_00372">
    <property type="entry name" value="HutI"/>
    <property type="match status" value="1"/>
</dbReference>
<dbReference type="InterPro" id="IPR006680">
    <property type="entry name" value="Amidohydro-rel"/>
</dbReference>
<dbReference type="InterPro" id="IPR005920">
    <property type="entry name" value="HutI"/>
</dbReference>
<dbReference type="InterPro" id="IPR011059">
    <property type="entry name" value="Metal-dep_hydrolase_composite"/>
</dbReference>
<dbReference type="InterPro" id="IPR032466">
    <property type="entry name" value="Metal_Hydrolase"/>
</dbReference>
<dbReference type="NCBIfam" id="TIGR01224">
    <property type="entry name" value="hutI"/>
    <property type="match status" value="1"/>
</dbReference>
<dbReference type="PANTHER" id="PTHR42752">
    <property type="entry name" value="IMIDAZOLONEPROPIONASE"/>
    <property type="match status" value="1"/>
</dbReference>
<dbReference type="PANTHER" id="PTHR42752:SF1">
    <property type="entry name" value="IMIDAZOLONEPROPIONASE-RELATED"/>
    <property type="match status" value="1"/>
</dbReference>
<dbReference type="Pfam" id="PF01979">
    <property type="entry name" value="Amidohydro_1"/>
    <property type="match status" value="1"/>
</dbReference>
<dbReference type="SUPFAM" id="SSF51338">
    <property type="entry name" value="Composite domain of metallo-dependent hydrolases"/>
    <property type="match status" value="1"/>
</dbReference>
<dbReference type="SUPFAM" id="SSF51556">
    <property type="entry name" value="Metallo-dependent hydrolases"/>
    <property type="match status" value="1"/>
</dbReference>